<comment type="function">
    <text evidence="1">Acts specifically as a negative regulator of skeletal muscle growth.</text>
</comment>
<comment type="subunit">
    <text evidence="1">Homodimer; disulfide-linked. Interacts with WFIKKN2, leading to inhibit its activity. Interacts with FSTL3.</text>
</comment>
<comment type="subcellular location">
    <subcellularLocation>
        <location evidence="1">Secreted</location>
    </subcellularLocation>
</comment>
<comment type="PTM">
    <text evidence="1">Synthesized as large precursor molecule that undergoes proteolytic cleavage to generate an N-terminal propeptide and a disulfide linked C-terminal dimer, which is the biologically active molecule. The circulating form consists of a latent complex of the C-terminal dimer and other proteins, including its propeptide, which maintain the C-terminal dimer in a latent, inactive state. Ligand activation requires additional cleavage of the prodomain by a tolloid-like metalloproteinase.</text>
</comment>
<comment type="similarity">
    <text evidence="4">Belongs to the TGF-beta family.</text>
</comment>
<reference key="1">
    <citation type="journal article" date="2006" name="Am. J. Hum. Genet.">
        <title>Human adaptive evolution at myostatin (GDF8), a regulator of muscle growth.</title>
        <authorList>
            <person name="Saunders M.A."/>
            <person name="Good J.M."/>
            <person name="Lawrence E.C."/>
            <person name="Ferrell R.E."/>
            <person name="Li W.H."/>
            <person name="Nachman M.W."/>
        </authorList>
    </citation>
    <scope>NUCLEOTIDE SEQUENCE [GENOMIC DNA]</scope>
</reference>
<dbReference type="EMBL" id="DQ927195">
    <property type="protein sequence ID" value="ABI48518.1"/>
    <property type="molecule type" value="Genomic_DNA"/>
</dbReference>
<dbReference type="RefSeq" id="NP_001073588.1">
    <property type="nucleotide sequence ID" value="NM_001080119.1"/>
</dbReference>
<dbReference type="SMR" id="A1C2U6"/>
<dbReference type="FunCoup" id="A1C2U6">
    <property type="interactions" value="341"/>
</dbReference>
<dbReference type="STRING" id="9544.ENSMMUP00000018789"/>
<dbReference type="GlyCosmos" id="A1C2U6">
    <property type="glycosylation" value="1 site, No reported glycans"/>
</dbReference>
<dbReference type="PaxDb" id="9544-ENSMMUP00000018789"/>
<dbReference type="Ensembl" id="ENSMMUT00000020075.4">
    <property type="protein sequence ID" value="ENSMMUP00000018789.2"/>
    <property type="gene ID" value="ENSMMUG00000014307.4"/>
</dbReference>
<dbReference type="GeneID" id="710114"/>
<dbReference type="KEGG" id="mcc:710114"/>
<dbReference type="CTD" id="2660"/>
<dbReference type="VEuPathDB" id="HostDB:ENSMMUG00000014307"/>
<dbReference type="VGNC" id="VGNC:74870">
    <property type="gene designation" value="MSTN"/>
</dbReference>
<dbReference type="eggNOG" id="KOG3900">
    <property type="taxonomic scope" value="Eukaryota"/>
</dbReference>
<dbReference type="GeneTree" id="ENSGT00940000160657"/>
<dbReference type="HOGENOM" id="CLU_020515_6_1_1"/>
<dbReference type="InParanoid" id="A1C2U6"/>
<dbReference type="OMA" id="CNACMWR"/>
<dbReference type="OrthoDB" id="5948587at2759"/>
<dbReference type="TreeFam" id="TF318514"/>
<dbReference type="Proteomes" id="UP000006718">
    <property type="component" value="Chromosome 12"/>
</dbReference>
<dbReference type="Bgee" id="ENSMMUG00000014307">
    <property type="expression patterns" value="Expressed in hindlimb stylopod muscle and 11 other cell types or tissues"/>
</dbReference>
<dbReference type="GO" id="GO:0005615">
    <property type="term" value="C:extracellular space"/>
    <property type="evidence" value="ECO:0000318"/>
    <property type="project" value="GO_Central"/>
</dbReference>
<dbReference type="GO" id="GO:0005125">
    <property type="term" value="F:cytokine activity"/>
    <property type="evidence" value="ECO:0000318"/>
    <property type="project" value="GO_Central"/>
</dbReference>
<dbReference type="GO" id="GO:0008083">
    <property type="term" value="F:growth factor activity"/>
    <property type="evidence" value="ECO:0007669"/>
    <property type="project" value="UniProtKB-KW"/>
</dbReference>
<dbReference type="GO" id="GO:0008201">
    <property type="term" value="F:heparin binding"/>
    <property type="evidence" value="ECO:0007669"/>
    <property type="project" value="UniProtKB-KW"/>
</dbReference>
<dbReference type="GO" id="GO:0042802">
    <property type="term" value="F:identical protein binding"/>
    <property type="evidence" value="ECO:0000250"/>
    <property type="project" value="UniProtKB"/>
</dbReference>
<dbReference type="GO" id="GO:0042803">
    <property type="term" value="F:protein homodimerization activity"/>
    <property type="evidence" value="ECO:0007669"/>
    <property type="project" value="Ensembl"/>
</dbReference>
<dbReference type="GO" id="GO:0043539">
    <property type="term" value="F:protein serine/threonine kinase activator activity"/>
    <property type="evidence" value="ECO:0007669"/>
    <property type="project" value="Ensembl"/>
</dbReference>
<dbReference type="GO" id="GO:0071549">
    <property type="term" value="P:cellular response to dexamethasone stimulus"/>
    <property type="evidence" value="ECO:0007669"/>
    <property type="project" value="Ensembl"/>
</dbReference>
<dbReference type="GO" id="GO:0046716">
    <property type="term" value="P:muscle cell cellular homeostasis"/>
    <property type="evidence" value="ECO:0007669"/>
    <property type="project" value="Ensembl"/>
</dbReference>
<dbReference type="GO" id="GO:0014839">
    <property type="term" value="P:myoblast migration involved in skeletal muscle regeneration"/>
    <property type="evidence" value="ECO:0000250"/>
    <property type="project" value="UniProtKB"/>
</dbReference>
<dbReference type="GO" id="GO:0046627">
    <property type="term" value="P:negative regulation of insulin receptor signaling pathway"/>
    <property type="evidence" value="ECO:0007669"/>
    <property type="project" value="Ensembl"/>
</dbReference>
<dbReference type="GO" id="GO:0045662">
    <property type="term" value="P:negative regulation of myoblast differentiation"/>
    <property type="evidence" value="ECO:0007669"/>
    <property type="project" value="Ensembl"/>
</dbReference>
<dbReference type="GO" id="GO:2000818">
    <property type="term" value="P:negative regulation of myoblast proliferation"/>
    <property type="evidence" value="ECO:0000250"/>
    <property type="project" value="AgBase"/>
</dbReference>
<dbReference type="GO" id="GO:0051898">
    <property type="term" value="P:negative regulation of phosphatidylinositol 3-kinase/protein kinase B signal transduction"/>
    <property type="evidence" value="ECO:0007669"/>
    <property type="project" value="Ensembl"/>
</dbReference>
<dbReference type="GO" id="GO:1902725">
    <property type="term" value="P:negative regulation of satellite cell differentiation"/>
    <property type="evidence" value="ECO:0000250"/>
    <property type="project" value="AgBase"/>
</dbReference>
<dbReference type="GO" id="GO:1902723">
    <property type="term" value="P:negative regulation of skeletal muscle satellite cell proliferation"/>
    <property type="evidence" value="ECO:0000250"/>
    <property type="project" value="AgBase"/>
</dbReference>
<dbReference type="GO" id="GO:0048632">
    <property type="term" value="P:negative regulation of skeletal muscle tissue growth"/>
    <property type="evidence" value="ECO:0007669"/>
    <property type="project" value="Ensembl"/>
</dbReference>
<dbReference type="GO" id="GO:0045893">
    <property type="term" value="P:positive regulation of DNA-templated transcription"/>
    <property type="evidence" value="ECO:0007669"/>
    <property type="project" value="Ensembl"/>
</dbReference>
<dbReference type="GO" id="GO:0010592">
    <property type="term" value="P:positive regulation of lamellipodium assembly"/>
    <property type="evidence" value="ECO:0000250"/>
    <property type="project" value="UniProtKB"/>
</dbReference>
<dbReference type="GO" id="GO:0010759">
    <property type="term" value="P:positive regulation of macrophage chemotaxis"/>
    <property type="evidence" value="ECO:0000250"/>
    <property type="project" value="UniProtKB"/>
</dbReference>
<dbReference type="GO" id="GO:0014816">
    <property type="term" value="P:skeletal muscle satellite cell differentiation"/>
    <property type="evidence" value="ECO:0007669"/>
    <property type="project" value="Ensembl"/>
</dbReference>
<dbReference type="GO" id="GO:0007179">
    <property type="term" value="P:transforming growth factor beta receptor signaling pathway"/>
    <property type="evidence" value="ECO:0007669"/>
    <property type="project" value="Ensembl"/>
</dbReference>
<dbReference type="CDD" id="cd19388">
    <property type="entry name" value="TGF_beta_GDF8"/>
    <property type="match status" value="1"/>
</dbReference>
<dbReference type="FunFam" id="2.60.120.970:FF:000001">
    <property type="entry name" value="Growth/differentiation factor 8"/>
    <property type="match status" value="1"/>
</dbReference>
<dbReference type="FunFam" id="2.10.90.10:FF:000006">
    <property type="entry name" value="growth/differentiation factor 8"/>
    <property type="match status" value="1"/>
</dbReference>
<dbReference type="Gene3D" id="2.60.120.970">
    <property type="match status" value="1"/>
</dbReference>
<dbReference type="Gene3D" id="2.10.90.10">
    <property type="entry name" value="Cystine-knot cytokines"/>
    <property type="match status" value="1"/>
</dbReference>
<dbReference type="InterPro" id="IPR029034">
    <property type="entry name" value="Cystine-knot_cytokine"/>
</dbReference>
<dbReference type="InterPro" id="IPR001839">
    <property type="entry name" value="TGF-b_C"/>
</dbReference>
<dbReference type="InterPro" id="IPR001111">
    <property type="entry name" value="TGF-b_propeptide"/>
</dbReference>
<dbReference type="InterPro" id="IPR015615">
    <property type="entry name" value="TGF-beta-rel"/>
</dbReference>
<dbReference type="InterPro" id="IPR017948">
    <property type="entry name" value="TGFb_CS"/>
</dbReference>
<dbReference type="PANTHER" id="PTHR11848:SF150">
    <property type="entry name" value="GROWTH_DIFFERENTIATION FACTOR 8"/>
    <property type="match status" value="1"/>
</dbReference>
<dbReference type="PANTHER" id="PTHR11848">
    <property type="entry name" value="TGF-BETA FAMILY"/>
    <property type="match status" value="1"/>
</dbReference>
<dbReference type="Pfam" id="PF00019">
    <property type="entry name" value="TGF_beta"/>
    <property type="match status" value="1"/>
</dbReference>
<dbReference type="Pfam" id="PF00688">
    <property type="entry name" value="TGFb_propeptide"/>
    <property type="match status" value="1"/>
</dbReference>
<dbReference type="SMART" id="SM00204">
    <property type="entry name" value="TGFB"/>
    <property type="match status" value="1"/>
</dbReference>
<dbReference type="SUPFAM" id="SSF57501">
    <property type="entry name" value="Cystine-knot cytokines"/>
    <property type="match status" value="1"/>
</dbReference>
<dbReference type="PROSITE" id="PS00250">
    <property type="entry name" value="TGF_BETA_1"/>
    <property type="match status" value="1"/>
</dbReference>
<dbReference type="PROSITE" id="PS51362">
    <property type="entry name" value="TGF_BETA_2"/>
    <property type="match status" value="1"/>
</dbReference>
<name>GDF8_MACMU</name>
<accession>A1C2U6</accession>
<feature type="signal peptide" evidence="3">
    <location>
        <begin position="1"/>
        <end position="23"/>
    </location>
</feature>
<feature type="propeptide" id="PRO_0000285562" evidence="3">
    <location>
        <begin position="24"/>
        <end position="266"/>
    </location>
</feature>
<feature type="chain" id="PRO_0000285563" description="Growth/differentiation factor 8">
    <location>
        <begin position="267"/>
        <end position="375"/>
    </location>
</feature>
<feature type="site" description="Cleavage" evidence="1">
    <location>
        <begin position="98"/>
        <end position="99"/>
    </location>
</feature>
<feature type="glycosylation site" description="N-linked (GlcNAc...) asparagine" evidence="3">
    <location>
        <position position="71"/>
    </location>
</feature>
<feature type="disulfide bond" evidence="2">
    <location>
        <begin position="272"/>
        <end position="282"/>
    </location>
</feature>
<feature type="disulfide bond" evidence="2">
    <location>
        <begin position="281"/>
        <end position="340"/>
    </location>
</feature>
<feature type="disulfide bond" evidence="2">
    <location>
        <begin position="309"/>
        <end position="372"/>
    </location>
</feature>
<feature type="disulfide bond" evidence="2">
    <location>
        <begin position="313"/>
        <end position="374"/>
    </location>
</feature>
<feature type="disulfide bond" description="Interchain" evidence="2">
    <location>
        <position position="339"/>
    </location>
</feature>
<sequence length="375" mass="42722">MQKLQLCVYIYLFMLIVAGPVDLNENSEQKENVEKEGLCNACTWRQNTKSSRIEAIKIQILSKLRLETAPNISKDAIRQLLPKAPPLRELIDQYDVQRDDSSDGSLEDDDYHATTETIITMPTESDFLMQVDGKPKCCFFKFSSKIQYNKVVKAQLWIYLRPVETPTTVFVQILRLIKPMKDGTRYTGIRSLKLDMNPGTGIWQSIDVKTVLQNWLKQPESNLGIEIKALDENGHDLAVTFPGPGEDGLNPFLEVKVTDTPKRSRRDFGLDCDEHSTESRCCRYPLTVDFEAFGWDWIIAPKRYKANYCSGECEFVFLQKYPHTHLVHQANPRGSAGPCCTPTKMSPINMLYFNGKEQIIYGKIPAMVVDRCGCS</sequence>
<evidence type="ECO:0000250" key="1">
    <source>
        <dbReference type="UniProtKB" id="O08689"/>
    </source>
</evidence>
<evidence type="ECO:0000250" key="2">
    <source>
        <dbReference type="UniProtKB" id="O14793"/>
    </source>
</evidence>
<evidence type="ECO:0000255" key="3"/>
<evidence type="ECO:0000305" key="4"/>
<organism>
    <name type="scientific">Macaca mulatta</name>
    <name type="common">Rhesus macaque</name>
    <dbReference type="NCBI Taxonomy" id="9544"/>
    <lineage>
        <taxon>Eukaryota</taxon>
        <taxon>Metazoa</taxon>
        <taxon>Chordata</taxon>
        <taxon>Craniata</taxon>
        <taxon>Vertebrata</taxon>
        <taxon>Euteleostomi</taxon>
        <taxon>Mammalia</taxon>
        <taxon>Eutheria</taxon>
        <taxon>Euarchontoglires</taxon>
        <taxon>Primates</taxon>
        <taxon>Haplorrhini</taxon>
        <taxon>Catarrhini</taxon>
        <taxon>Cercopithecidae</taxon>
        <taxon>Cercopithecinae</taxon>
        <taxon>Macaca</taxon>
    </lineage>
</organism>
<keyword id="KW-0165">Cleavage on pair of basic residues</keyword>
<keyword id="KW-0202">Cytokine</keyword>
<keyword id="KW-1015">Disulfide bond</keyword>
<keyword id="KW-0325">Glycoprotein</keyword>
<keyword id="KW-0339">Growth factor</keyword>
<keyword id="KW-0358">Heparin-binding</keyword>
<keyword id="KW-1185">Reference proteome</keyword>
<keyword id="KW-0964">Secreted</keyword>
<keyword id="KW-0732">Signal</keyword>
<gene>
    <name type="primary">MSTN</name>
    <name type="synonym">GDF8</name>
</gene>
<protein>
    <recommendedName>
        <fullName>Growth/differentiation factor 8</fullName>
        <shortName>GDF-8</shortName>
    </recommendedName>
    <alternativeName>
        <fullName>Myostatin</fullName>
    </alternativeName>
</protein>
<proteinExistence type="inferred from homology"/>